<comment type="function">
    <text evidence="1">Catalyzes 2 different reactions between oxygen and the acireductone 1,2-dihydroxy-3-keto-5-methylthiopentene (DHK-MTPene) depending upon the metal bound in the active site. Fe-containing acireductone dioxygenase (Fe-ARD) produces formate and 2-keto-4-methylthiobutyrate (KMTB), the alpha-ketoacid precursor of methionine in the methionine recycle pathway. Ni-containing acireductone dioxygenase (Ni-ARD) produces methylthiopropionate, carbon monoxide and formate, and does not lie on the methionine recycle pathway.</text>
</comment>
<comment type="catalytic activity">
    <reaction evidence="1">
        <text>1,2-dihydroxy-5-(methylsulfanyl)pent-1-en-3-one + O2 = 3-(methylsulfanyl)propanoate + CO + formate + 2 H(+)</text>
        <dbReference type="Rhea" id="RHEA:14161"/>
        <dbReference type="ChEBI" id="CHEBI:15378"/>
        <dbReference type="ChEBI" id="CHEBI:15379"/>
        <dbReference type="ChEBI" id="CHEBI:15740"/>
        <dbReference type="ChEBI" id="CHEBI:17245"/>
        <dbReference type="ChEBI" id="CHEBI:49016"/>
        <dbReference type="ChEBI" id="CHEBI:49252"/>
        <dbReference type="EC" id="1.13.11.53"/>
    </reaction>
</comment>
<comment type="catalytic activity">
    <reaction evidence="1">
        <text>1,2-dihydroxy-5-(methylsulfanyl)pent-1-en-3-one + O2 = 4-methylsulfanyl-2-oxobutanoate + formate + 2 H(+)</text>
        <dbReference type="Rhea" id="RHEA:24504"/>
        <dbReference type="ChEBI" id="CHEBI:15378"/>
        <dbReference type="ChEBI" id="CHEBI:15379"/>
        <dbReference type="ChEBI" id="CHEBI:15740"/>
        <dbReference type="ChEBI" id="CHEBI:16723"/>
        <dbReference type="ChEBI" id="CHEBI:49252"/>
        <dbReference type="EC" id="1.13.11.54"/>
    </reaction>
</comment>
<comment type="cofactor">
    <cofactor evidence="1">
        <name>Fe(2+)</name>
        <dbReference type="ChEBI" id="CHEBI:29033"/>
    </cofactor>
    <text evidence="1">Binds 1 Fe(2+) cation per monomer.</text>
</comment>
<comment type="cofactor">
    <cofactor evidence="1">
        <name>Ni(2+)</name>
        <dbReference type="ChEBI" id="CHEBI:49786"/>
    </cofactor>
    <text evidence="1">Binds 1 nickel ion per monomer.</text>
</comment>
<comment type="pathway">
    <text evidence="1">Amino-acid biosynthesis; L-methionine biosynthesis via salvage pathway; L-methionine from S-methyl-5-thio-alpha-D-ribose 1-phosphate: step 5/6.</text>
</comment>
<comment type="subunit">
    <text evidence="1">Monomer.</text>
</comment>
<comment type="similarity">
    <text evidence="1">Belongs to the acireductone dioxygenase (ARD) family.</text>
</comment>
<accession>Q75FG2</accession>
<name>MTND_LEPIC</name>
<feature type="chain" id="PRO_0000359207" description="Acireductone dioxygenase">
    <location>
        <begin position="1"/>
        <end position="177"/>
    </location>
</feature>
<feature type="binding site" evidence="1">
    <location>
        <position position="99"/>
    </location>
    <ligand>
        <name>Fe(2+)</name>
        <dbReference type="ChEBI" id="CHEBI:29033"/>
    </ligand>
</feature>
<feature type="binding site" evidence="1">
    <location>
        <position position="99"/>
    </location>
    <ligand>
        <name>Ni(2+)</name>
        <dbReference type="ChEBI" id="CHEBI:49786"/>
    </ligand>
</feature>
<feature type="binding site" evidence="1">
    <location>
        <position position="101"/>
    </location>
    <ligand>
        <name>Fe(2+)</name>
        <dbReference type="ChEBI" id="CHEBI:29033"/>
    </ligand>
</feature>
<feature type="binding site" evidence="1">
    <location>
        <position position="101"/>
    </location>
    <ligand>
        <name>Ni(2+)</name>
        <dbReference type="ChEBI" id="CHEBI:49786"/>
    </ligand>
</feature>
<feature type="binding site" evidence="1">
    <location>
        <position position="105"/>
    </location>
    <ligand>
        <name>Fe(2+)</name>
        <dbReference type="ChEBI" id="CHEBI:29033"/>
    </ligand>
</feature>
<feature type="binding site" evidence="1">
    <location>
        <position position="105"/>
    </location>
    <ligand>
        <name>Ni(2+)</name>
        <dbReference type="ChEBI" id="CHEBI:49786"/>
    </ligand>
</feature>
<feature type="binding site" evidence="1">
    <location>
        <position position="143"/>
    </location>
    <ligand>
        <name>Fe(2+)</name>
        <dbReference type="ChEBI" id="CHEBI:29033"/>
    </ligand>
</feature>
<feature type="binding site" evidence="1">
    <location>
        <position position="143"/>
    </location>
    <ligand>
        <name>Ni(2+)</name>
        <dbReference type="ChEBI" id="CHEBI:49786"/>
    </ligand>
</feature>
<feature type="site" description="Important to generate the dianion" evidence="1">
    <location>
        <position position="107"/>
    </location>
</feature>
<reference key="1">
    <citation type="journal article" date="2004" name="J. Bacteriol.">
        <title>Comparative genomics of two Leptospira interrogans serovars reveals novel insights into physiology and pathogenesis.</title>
        <authorList>
            <person name="Nascimento A.L.T.O."/>
            <person name="Ko A.I."/>
            <person name="Martins E.A.L."/>
            <person name="Monteiro-Vitorello C.B."/>
            <person name="Ho P.L."/>
            <person name="Haake D.A."/>
            <person name="Verjovski-Almeida S."/>
            <person name="Hartskeerl R.A."/>
            <person name="Marques M.V."/>
            <person name="Oliveira M.C."/>
            <person name="Menck C.F.M."/>
            <person name="Leite L.C.C."/>
            <person name="Carrer H."/>
            <person name="Coutinho L.L."/>
            <person name="Degrave W.M."/>
            <person name="Dellagostin O.A."/>
            <person name="El-Dorry H."/>
            <person name="Ferro E.S."/>
            <person name="Ferro M.I.T."/>
            <person name="Furlan L.R."/>
            <person name="Gamberini M."/>
            <person name="Giglioti E.A."/>
            <person name="Goes-Neto A."/>
            <person name="Goldman G.H."/>
            <person name="Goldman M.H.S."/>
            <person name="Harakava R."/>
            <person name="Jeronimo S.M.B."/>
            <person name="Junqueira-de-Azevedo I.L.M."/>
            <person name="Kimura E.T."/>
            <person name="Kuramae E.E."/>
            <person name="Lemos E.G.M."/>
            <person name="Lemos M.V.F."/>
            <person name="Marino C.L."/>
            <person name="Nunes L.R."/>
            <person name="de Oliveira R.C."/>
            <person name="Pereira G.G."/>
            <person name="Reis M.S."/>
            <person name="Schriefer A."/>
            <person name="Siqueira W.J."/>
            <person name="Sommer P."/>
            <person name="Tsai S.M."/>
            <person name="Simpson A.J.G."/>
            <person name="Ferro J.A."/>
            <person name="Camargo L.E.A."/>
            <person name="Kitajima J.P."/>
            <person name="Setubal J.C."/>
            <person name="Van Sluys M.A."/>
        </authorList>
    </citation>
    <scope>NUCLEOTIDE SEQUENCE [LARGE SCALE GENOMIC DNA]</scope>
    <source>
        <strain>Fiocruz L1-130</strain>
    </source>
</reference>
<sequence>MATIVRQNGLTPIQETNEVKSFLKERGIDYDHWKVPHNASNLTDKEVLVDTEKEELLKKLDDRFETLKAKEGYQSRDLIVLHPNVSGLNEMLAKFDKVHYHTDEEVRYIVDGSGVFGFAFKDEKFLVHVYKDDFISVPRNTNHWFYLDDKKRIKAVRYFQDMSGWVPNYVEETNSLD</sequence>
<dbReference type="EC" id="1.13.11.54" evidence="1"/>
<dbReference type="EC" id="1.13.11.53" evidence="1"/>
<dbReference type="EMBL" id="AE016824">
    <property type="protein sequence ID" value="AAS72253.1"/>
    <property type="molecule type" value="Genomic_DNA"/>
</dbReference>
<dbReference type="RefSeq" id="WP_000201440.1">
    <property type="nucleotide sequence ID" value="NC_005824.1"/>
</dbReference>
<dbReference type="SMR" id="Q75FG2"/>
<dbReference type="KEGG" id="lic:LIC_20227"/>
<dbReference type="HOGENOM" id="CLU_125400_0_0_12"/>
<dbReference type="UniPathway" id="UPA00904">
    <property type="reaction ID" value="UER00878"/>
</dbReference>
<dbReference type="Proteomes" id="UP000007037">
    <property type="component" value="Chromosome II"/>
</dbReference>
<dbReference type="GO" id="GO:0010308">
    <property type="term" value="F:acireductone dioxygenase (Ni2+-requiring) activity"/>
    <property type="evidence" value="ECO:0007669"/>
    <property type="project" value="UniProtKB-UniRule"/>
</dbReference>
<dbReference type="GO" id="GO:0010309">
    <property type="term" value="F:acireductone dioxygenase [iron(II)-requiring] activity"/>
    <property type="evidence" value="ECO:0007669"/>
    <property type="project" value="UniProtKB-UniRule"/>
</dbReference>
<dbReference type="GO" id="GO:0005506">
    <property type="term" value="F:iron ion binding"/>
    <property type="evidence" value="ECO:0007669"/>
    <property type="project" value="UniProtKB-UniRule"/>
</dbReference>
<dbReference type="GO" id="GO:0016151">
    <property type="term" value="F:nickel cation binding"/>
    <property type="evidence" value="ECO:0007669"/>
    <property type="project" value="UniProtKB-UniRule"/>
</dbReference>
<dbReference type="GO" id="GO:0019509">
    <property type="term" value="P:L-methionine salvage from methylthioadenosine"/>
    <property type="evidence" value="ECO:0007669"/>
    <property type="project" value="UniProtKB-UniRule"/>
</dbReference>
<dbReference type="GO" id="GO:0019284">
    <property type="term" value="P:L-methionine salvage from S-adenosylmethionine"/>
    <property type="evidence" value="ECO:0007669"/>
    <property type="project" value="InterPro"/>
</dbReference>
<dbReference type="CDD" id="cd02232">
    <property type="entry name" value="cupin_ARD"/>
    <property type="match status" value="1"/>
</dbReference>
<dbReference type="Gene3D" id="2.60.120.10">
    <property type="entry name" value="Jelly Rolls"/>
    <property type="match status" value="1"/>
</dbReference>
<dbReference type="HAMAP" id="MF_01682">
    <property type="entry name" value="Salvage_MtnD"/>
    <property type="match status" value="1"/>
</dbReference>
<dbReference type="InterPro" id="IPR004313">
    <property type="entry name" value="ARD"/>
</dbReference>
<dbReference type="InterPro" id="IPR023956">
    <property type="entry name" value="ARD_bac"/>
</dbReference>
<dbReference type="InterPro" id="IPR014710">
    <property type="entry name" value="RmlC-like_jellyroll"/>
</dbReference>
<dbReference type="InterPro" id="IPR011051">
    <property type="entry name" value="RmlC_Cupin_sf"/>
</dbReference>
<dbReference type="PANTHER" id="PTHR23418">
    <property type="entry name" value="ACIREDUCTONE DIOXYGENASE"/>
    <property type="match status" value="1"/>
</dbReference>
<dbReference type="PANTHER" id="PTHR23418:SF0">
    <property type="entry name" value="ACIREDUCTONE DIOXYGENASE"/>
    <property type="match status" value="1"/>
</dbReference>
<dbReference type="Pfam" id="PF03079">
    <property type="entry name" value="ARD"/>
    <property type="match status" value="1"/>
</dbReference>
<dbReference type="SUPFAM" id="SSF51182">
    <property type="entry name" value="RmlC-like cupins"/>
    <property type="match status" value="1"/>
</dbReference>
<gene>
    <name evidence="1" type="primary">mtnD</name>
    <name type="synonym">ard</name>
    <name type="ordered locus">LIC_20227</name>
</gene>
<evidence type="ECO:0000255" key="1">
    <source>
        <dbReference type="HAMAP-Rule" id="MF_01682"/>
    </source>
</evidence>
<protein>
    <recommendedName>
        <fullName evidence="1">Acireductone dioxygenase</fullName>
    </recommendedName>
    <alternativeName>
        <fullName evidence="1">1,2-dihydroxy-3-keto-5-methylthiopentene dioxygenase</fullName>
        <shortName evidence="1">DHK-MTPene dioxygenase</shortName>
    </alternativeName>
    <alternativeName>
        <fullName evidence="1">Acireductone dioxygenase (Fe(2+)-requiring)</fullName>
        <shortName evidence="1">ARD'</shortName>
        <shortName evidence="1">Fe-ARD</shortName>
        <ecNumber evidence="1">1.13.11.54</ecNumber>
    </alternativeName>
    <alternativeName>
        <fullName evidence="1">Acireductone dioxygenase (Ni(2+)-requiring)</fullName>
        <shortName evidence="1">ARD</shortName>
        <shortName evidence="1">Ni-ARD</shortName>
        <ecNumber evidence="1">1.13.11.53</ecNumber>
    </alternativeName>
</protein>
<proteinExistence type="inferred from homology"/>
<keyword id="KW-0028">Amino-acid biosynthesis</keyword>
<keyword id="KW-0223">Dioxygenase</keyword>
<keyword id="KW-0408">Iron</keyword>
<keyword id="KW-0479">Metal-binding</keyword>
<keyword id="KW-0486">Methionine biosynthesis</keyword>
<keyword id="KW-0533">Nickel</keyword>
<keyword id="KW-0560">Oxidoreductase</keyword>
<organism>
    <name type="scientific">Leptospira interrogans serogroup Icterohaemorrhagiae serovar copenhageni (strain Fiocruz L1-130)</name>
    <dbReference type="NCBI Taxonomy" id="267671"/>
    <lineage>
        <taxon>Bacteria</taxon>
        <taxon>Pseudomonadati</taxon>
        <taxon>Spirochaetota</taxon>
        <taxon>Spirochaetia</taxon>
        <taxon>Leptospirales</taxon>
        <taxon>Leptospiraceae</taxon>
        <taxon>Leptospira</taxon>
    </lineage>
</organism>